<dbReference type="EMBL" id="AJ749949">
    <property type="protein sequence ID" value="CAG45023.1"/>
    <property type="molecule type" value="Genomic_DNA"/>
</dbReference>
<dbReference type="RefSeq" id="WP_003020074.1">
    <property type="nucleotide sequence ID" value="NC_006570.2"/>
</dbReference>
<dbReference type="RefSeq" id="YP_169435.1">
    <property type="nucleotide sequence ID" value="NC_006570.2"/>
</dbReference>
<dbReference type="SMR" id="Q5NHQ7"/>
<dbReference type="STRING" id="177416.FTT_0390c"/>
<dbReference type="DNASU" id="3191264"/>
<dbReference type="EnsemblBacteria" id="CAG45023">
    <property type="protein sequence ID" value="CAG45023"/>
    <property type="gene ID" value="FTT_0390c"/>
</dbReference>
<dbReference type="KEGG" id="ftu:FTT_0390c"/>
<dbReference type="eggNOG" id="COG0828">
    <property type="taxonomic scope" value="Bacteria"/>
</dbReference>
<dbReference type="OrthoDB" id="9799244at2"/>
<dbReference type="Proteomes" id="UP000001174">
    <property type="component" value="Chromosome"/>
</dbReference>
<dbReference type="GO" id="GO:1990904">
    <property type="term" value="C:ribonucleoprotein complex"/>
    <property type="evidence" value="ECO:0007669"/>
    <property type="project" value="UniProtKB-KW"/>
</dbReference>
<dbReference type="GO" id="GO:0005840">
    <property type="term" value="C:ribosome"/>
    <property type="evidence" value="ECO:0007669"/>
    <property type="project" value="UniProtKB-KW"/>
</dbReference>
<dbReference type="GO" id="GO:0003735">
    <property type="term" value="F:structural constituent of ribosome"/>
    <property type="evidence" value="ECO:0007669"/>
    <property type="project" value="InterPro"/>
</dbReference>
<dbReference type="GO" id="GO:0006412">
    <property type="term" value="P:translation"/>
    <property type="evidence" value="ECO:0007669"/>
    <property type="project" value="UniProtKB-UniRule"/>
</dbReference>
<dbReference type="Gene3D" id="1.20.5.1150">
    <property type="entry name" value="Ribosomal protein S8"/>
    <property type="match status" value="1"/>
</dbReference>
<dbReference type="HAMAP" id="MF_00358">
    <property type="entry name" value="Ribosomal_bS21"/>
    <property type="match status" value="1"/>
</dbReference>
<dbReference type="InterPro" id="IPR001911">
    <property type="entry name" value="Ribosomal_bS21"/>
</dbReference>
<dbReference type="InterPro" id="IPR038380">
    <property type="entry name" value="Ribosomal_bS21_sf"/>
</dbReference>
<dbReference type="NCBIfam" id="TIGR00030">
    <property type="entry name" value="S21p"/>
    <property type="match status" value="1"/>
</dbReference>
<dbReference type="Pfam" id="PF01165">
    <property type="entry name" value="Ribosomal_S21"/>
    <property type="match status" value="1"/>
</dbReference>
<dbReference type="PRINTS" id="PR00976">
    <property type="entry name" value="RIBOSOMALS21"/>
</dbReference>
<reference key="1">
    <citation type="journal article" date="2005" name="Nat. Genet.">
        <title>The complete genome sequence of Francisella tularensis, the causative agent of tularemia.</title>
        <authorList>
            <person name="Larsson P."/>
            <person name="Oyston P.C.F."/>
            <person name="Chain P."/>
            <person name="Chu M.C."/>
            <person name="Duffield M."/>
            <person name="Fuxelius H.-H."/>
            <person name="Garcia E."/>
            <person name="Haelltorp G."/>
            <person name="Johansson D."/>
            <person name="Isherwood K.E."/>
            <person name="Karp P.D."/>
            <person name="Larsson E."/>
            <person name="Liu Y."/>
            <person name="Michell S."/>
            <person name="Prior J."/>
            <person name="Prior R."/>
            <person name="Malfatti S."/>
            <person name="Sjoestedt A."/>
            <person name="Svensson K."/>
            <person name="Thompson N."/>
            <person name="Vergez L."/>
            <person name="Wagg J.K."/>
            <person name="Wren B.W."/>
            <person name="Lindler L.E."/>
            <person name="Andersson S.G.E."/>
            <person name="Forsman M."/>
            <person name="Titball R.W."/>
        </authorList>
    </citation>
    <scope>NUCLEOTIDE SEQUENCE [LARGE SCALE GENOMIC DNA]</scope>
    <source>
        <strain>SCHU S4 / Schu 4</strain>
    </source>
</reference>
<organism>
    <name type="scientific">Francisella tularensis subsp. tularensis (strain SCHU S4 / Schu 4)</name>
    <dbReference type="NCBI Taxonomy" id="177416"/>
    <lineage>
        <taxon>Bacteria</taxon>
        <taxon>Pseudomonadati</taxon>
        <taxon>Pseudomonadota</taxon>
        <taxon>Gammaproteobacteria</taxon>
        <taxon>Thiotrichales</taxon>
        <taxon>Francisellaceae</taxon>
        <taxon>Francisella</taxon>
    </lineage>
</organism>
<evidence type="ECO:0000255" key="1">
    <source>
        <dbReference type="HAMAP-Rule" id="MF_00358"/>
    </source>
</evidence>
<evidence type="ECO:0000305" key="2"/>
<protein>
    <recommendedName>
        <fullName evidence="1">Small ribosomal subunit protein bS21A</fullName>
    </recommendedName>
    <alternativeName>
        <fullName evidence="2">30S ribosomal protein S21 1</fullName>
    </alternativeName>
</protein>
<accession>Q5NHQ7</accession>
<sequence length="65" mass="7838">MLSIKVDERKPFDISLRNFKRACEKAGIKQELRDRQHYVKPTEKRKIAKRQAVKRARISQRRAFI</sequence>
<proteinExistence type="inferred from homology"/>
<gene>
    <name evidence="1" type="primary">rpsU1</name>
    <name type="ordered locus">FTT_0390c</name>
</gene>
<keyword id="KW-1185">Reference proteome</keyword>
<keyword id="KW-0687">Ribonucleoprotein</keyword>
<keyword id="KW-0689">Ribosomal protein</keyword>
<name>RS211_FRATT</name>
<comment type="similarity">
    <text evidence="1">Belongs to the bacterial ribosomal protein bS21 family.</text>
</comment>
<feature type="chain" id="PRO_0000266674" description="Small ribosomal subunit protein bS21A">
    <location>
        <begin position="1"/>
        <end position="65"/>
    </location>
</feature>